<proteinExistence type="inferred from homology"/>
<accession>Q2JTR0</accession>
<feature type="chain" id="PRO_0000257483" description="tRNA (guanine-N(1)-)-methyltransferase">
    <location>
        <begin position="1"/>
        <end position="253"/>
    </location>
</feature>
<feature type="binding site" evidence="1">
    <location>
        <position position="111"/>
    </location>
    <ligand>
        <name>S-adenosyl-L-methionine</name>
        <dbReference type="ChEBI" id="CHEBI:59789"/>
    </ligand>
</feature>
<feature type="binding site" evidence="1">
    <location>
        <begin position="131"/>
        <end position="136"/>
    </location>
    <ligand>
        <name>S-adenosyl-L-methionine</name>
        <dbReference type="ChEBI" id="CHEBI:59789"/>
    </ligand>
</feature>
<comment type="function">
    <text evidence="1">Specifically methylates guanosine-37 in various tRNAs.</text>
</comment>
<comment type="catalytic activity">
    <reaction evidence="1">
        <text>guanosine(37) in tRNA + S-adenosyl-L-methionine = N(1)-methylguanosine(37) in tRNA + S-adenosyl-L-homocysteine + H(+)</text>
        <dbReference type="Rhea" id="RHEA:36899"/>
        <dbReference type="Rhea" id="RHEA-COMP:10145"/>
        <dbReference type="Rhea" id="RHEA-COMP:10147"/>
        <dbReference type="ChEBI" id="CHEBI:15378"/>
        <dbReference type="ChEBI" id="CHEBI:57856"/>
        <dbReference type="ChEBI" id="CHEBI:59789"/>
        <dbReference type="ChEBI" id="CHEBI:73542"/>
        <dbReference type="ChEBI" id="CHEBI:74269"/>
        <dbReference type="EC" id="2.1.1.228"/>
    </reaction>
</comment>
<comment type="subunit">
    <text evidence="1">Homodimer.</text>
</comment>
<comment type="subcellular location">
    <subcellularLocation>
        <location evidence="1">Cytoplasm</location>
    </subcellularLocation>
</comment>
<comment type="similarity">
    <text evidence="1">Belongs to the RNA methyltransferase TrmD family.</text>
</comment>
<evidence type="ECO:0000255" key="1">
    <source>
        <dbReference type="HAMAP-Rule" id="MF_00605"/>
    </source>
</evidence>
<name>TRMD_SYNJA</name>
<reference key="1">
    <citation type="journal article" date="2007" name="ISME J.">
        <title>Population level functional diversity in a microbial community revealed by comparative genomic and metagenomic analyses.</title>
        <authorList>
            <person name="Bhaya D."/>
            <person name="Grossman A.R."/>
            <person name="Steunou A.-S."/>
            <person name="Khuri N."/>
            <person name="Cohan F.M."/>
            <person name="Hamamura N."/>
            <person name="Melendrez M.C."/>
            <person name="Bateson M.M."/>
            <person name="Ward D.M."/>
            <person name="Heidelberg J.F."/>
        </authorList>
    </citation>
    <scope>NUCLEOTIDE SEQUENCE [LARGE SCALE GENOMIC DNA]</scope>
    <source>
        <strain>JA-3-3Ab</strain>
    </source>
</reference>
<keyword id="KW-0963">Cytoplasm</keyword>
<keyword id="KW-0489">Methyltransferase</keyword>
<keyword id="KW-0949">S-adenosyl-L-methionine</keyword>
<keyword id="KW-0808">Transferase</keyword>
<keyword id="KW-0819">tRNA processing</keyword>
<sequence>MRFDVITLFPEFFATPLRIGLVGKALEQGIAEVHCTNPRDFATDKHRRVDDEPYGGGVGMVLKPEPFFAAVASLPRLDPCEIILLTPQGQPLNQALLQELAQKAQLILLCGQYEGFDERIRQHLATREVSLGDFVLTGGEIPALALINGVVRLLPGTVGKIDSLRSESFETGLLEYPQYTRPPEFQGHKVPPVLLSGDHRAIARWRLQQQLVRTWRRRPDLLAKRPLTPEEQQLLAEGLAEQHTDVEEQDRCL</sequence>
<gene>
    <name evidence="1" type="primary">trmD</name>
    <name type="ordered locus">CYA_1775</name>
</gene>
<dbReference type="EC" id="2.1.1.228" evidence="1"/>
<dbReference type="EMBL" id="CP000239">
    <property type="protein sequence ID" value="ABC99929.1"/>
    <property type="molecule type" value="Genomic_DNA"/>
</dbReference>
<dbReference type="RefSeq" id="WP_011430605.1">
    <property type="nucleotide sequence ID" value="NC_007775.1"/>
</dbReference>
<dbReference type="SMR" id="Q2JTR0"/>
<dbReference type="STRING" id="321327.CYA_1775"/>
<dbReference type="KEGG" id="cya:CYA_1775"/>
<dbReference type="eggNOG" id="COG0336">
    <property type="taxonomic scope" value="Bacteria"/>
</dbReference>
<dbReference type="HOGENOM" id="CLU_047363_0_1_3"/>
<dbReference type="OrthoDB" id="9807416at2"/>
<dbReference type="Proteomes" id="UP000008818">
    <property type="component" value="Chromosome"/>
</dbReference>
<dbReference type="GO" id="GO:0005829">
    <property type="term" value="C:cytosol"/>
    <property type="evidence" value="ECO:0007669"/>
    <property type="project" value="TreeGrafter"/>
</dbReference>
<dbReference type="GO" id="GO:0052906">
    <property type="term" value="F:tRNA (guanine(37)-N1)-methyltransferase activity"/>
    <property type="evidence" value="ECO:0007669"/>
    <property type="project" value="UniProtKB-UniRule"/>
</dbReference>
<dbReference type="GO" id="GO:0002939">
    <property type="term" value="P:tRNA N1-guanine methylation"/>
    <property type="evidence" value="ECO:0007669"/>
    <property type="project" value="TreeGrafter"/>
</dbReference>
<dbReference type="CDD" id="cd18080">
    <property type="entry name" value="TrmD-like"/>
    <property type="match status" value="1"/>
</dbReference>
<dbReference type="FunFam" id="1.10.1270.20:FF:000001">
    <property type="entry name" value="tRNA (guanine-N(1)-)-methyltransferase"/>
    <property type="match status" value="1"/>
</dbReference>
<dbReference type="FunFam" id="3.40.1280.10:FF:000001">
    <property type="entry name" value="tRNA (guanine-N(1)-)-methyltransferase"/>
    <property type="match status" value="1"/>
</dbReference>
<dbReference type="Gene3D" id="3.40.1280.10">
    <property type="match status" value="1"/>
</dbReference>
<dbReference type="Gene3D" id="1.10.1270.20">
    <property type="entry name" value="tRNA(m1g37)methyltransferase, domain 2"/>
    <property type="match status" value="1"/>
</dbReference>
<dbReference type="HAMAP" id="MF_00605">
    <property type="entry name" value="TrmD"/>
    <property type="match status" value="1"/>
</dbReference>
<dbReference type="InterPro" id="IPR029028">
    <property type="entry name" value="Alpha/beta_knot_MTases"/>
</dbReference>
<dbReference type="InterPro" id="IPR023148">
    <property type="entry name" value="tRNA_m1G_MeTrfase_C_sf"/>
</dbReference>
<dbReference type="InterPro" id="IPR002649">
    <property type="entry name" value="tRNA_m1G_MeTrfase_TrmD"/>
</dbReference>
<dbReference type="InterPro" id="IPR029026">
    <property type="entry name" value="tRNA_m1G_MTases_N"/>
</dbReference>
<dbReference type="InterPro" id="IPR016009">
    <property type="entry name" value="tRNA_MeTrfase_TRMD/TRM10"/>
</dbReference>
<dbReference type="NCBIfam" id="NF000648">
    <property type="entry name" value="PRK00026.1"/>
    <property type="match status" value="1"/>
</dbReference>
<dbReference type="NCBIfam" id="TIGR00088">
    <property type="entry name" value="trmD"/>
    <property type="match status" value="1"/>
</dbReference>
<dbReference type="PANTHER" id="PTHR46417">
    <property type="entry name" value="TRNA (GUANINE-N(1)-)-METHYLTRANSFERASE"/>
    <property type="match status" value="1"/>
</dbReference>
<dbReference type="PANTHER" id="PTHR46417:SF1">
    <property type="entry name" value="TRNA (GUANINE-N(1)-)-METHYLTRANSFERASE"/>
    <property type="match status" value="1"/>
</dbReference>
<dbReference type="Pfam" id="PF01746">
    <property type="entry name" value="tRNA_m1G_MT"/>
    <property type="match status" value="1"/>
</dbReference>
<dbReference type="PIRSF" id="PIRSF000386">
    <property type="entry name" value="tRNA_mtase"/>
    <property type="match status" value="1"/>
</dbReference>
<dbReference type="SUPFAM" id="SSF75217">
    <property type="entry name" value="alpha/beta knot"/>
    <property type="match status" value="1"/>
</dbReference>
<organism>
    <name type="scientific">Synechococcus sp. (strain JA-3-3Ab)</name>
    <name type="common">Cyanobacteria bacterium Yellowstone A-Prime</name>
    <dbReference type="NCBI Taxonomy" id="321327"/>
    <lineage>
        <taxon>Bacteria</taxon>
        <taxon>Bacillati</taxon>
        <taxon>Cyanobacteriota</taxon>
        <taxon>Cyanophyceae</taxon>
        <taxon>Synechococcales</taxon>
        <taxon>Synechococcaceae</taxon>
        <taxon>Synechococcus</taxon>
    </lineage>
</organism>
<protein>
    <recommendedName>
        <fullName evidence="1">tRNA (guanine-N(1)-)-methyltransferase</fullName>
        <ecNumber evidence="1">2.1.1.228</ecNumber>
    </recommendedName>
    <alternativeName>
        <fullName evidence="1">M1G-methyltransferase</fullName>
    </alternativeName>
    <alternativeName>
        <fullName evidence="1">tRNA [GM37] methyltransferase</fullName>
    </alternativeName>
</protein>